<evidence type="ECO:0000255" key="1">
    <source>
        <dbReference type="HAMAP-Rule" id="MF_00144"/>
    </source>
</evidence>
<evidence type="ECO:0000305" key="2"/>
<protein>
    <recommendedName>
        <fullName evidence="1">tRNA-specific 2-thiouridylase MnmA</fullName>
        <ecNumber evidence="1">2.8.1.13</ecNumber>
    </recommendedName>
</protein>
<accession>A0QJE5</accession>
<gene>
    <name evidence="1" type="primary">mnmA</name>
    <name type="ordered locus">MAV_3871</name>
</gene>
<feature type="chain" id="PRO_0000349703" description="tRNA-specific 2-thiouridylase MnmA">
    <location>
        <begin position="1"/>
        <end position="358"/>
    </location>
</feature>
<feature type="region of interest" description="Interaction with tRNA" evidence="1">
    <location>
        <begin position="143"/>
        <end position="145"/>
    </location>
</feature>
<feature type="active site" description="Nucleophile" evidence="1">
    <location>
        <position position="101"/>
    </location>
</feature>
<feature type="active site" description="Cysteine persulfide intermediate" evidence="1">
    <location>
        <position position="193"/>
    </location>
</feature>
<feature type="binding site" evidence="1">
    <location>
        <begin position="6"/>
        <end position="13"/>
    </location>
    <ligand>
        <name>ATP</name>
        <dbReference type="ChEBI" id="CHEBI:30616"/>
    </ligand>
</feature>
<feature type="binding site" evidence="1">
    <location>
        <position position="32"/>
    </location>
    <ligand>
        <name>ATP</name>
        <dbReference type="ChEBI" id="CHEBI:30616"/>
    </ligand>
</feature>
<feature type="binding site" evidence="1">
    <location>
        <position position="125"/>
    </location>
    <ligand>
        <name>ATP</name>
        <dbReference type="ChEBI" id="CHEBI:30616"/>
    </ligand>
</feature>
<feature type="site" description="Interaction with tRNA" evidence="1">
    <location>
        <position position="126"/>
    </location>
</feature>
<feature type="site" description="Interaction with tRNA" evidence="1">
    <location>
        <position position="333"/>
    </location>
</feature>
<feature type="disulfide bond" description="Alternate" evidence="1">
    <location>
        <begin position="101"/>
        <end position="193"/>
    </location>
</feature>
<name>MNMA_MYCA1</name>
<organism>
    <name type="scientific">Mycobacterium avium (strain 104)</name>
    <dbReference type="NCBI Taxonomy" id="243243"/>
    <lineage>
        <taxon>Bacteria</taxon>
        <taxon>Bacillati</taxon>
        <taxon>Actinomycetota</taxon>
        <taxon>Actinomycetes</taxon>
        <taxon>Mycobacteriales</taxon>
        <taxon>Mycobacteriaceae</taxon>
        <taxon>Mycobacterium</taxon>
        <taxon>Mycobacterium avium complex (MAC)</taxon>
    </lineage>
</organism>
<sequence>MRVLAAMSGGVDSSVAAARMVDAGHDVVGVHLALSTAPGTLRTGSRGCCSKEDASDARRVADVLGIPFYVWDFAEKFQADVIDEFVSAYARGETPNPCVTCNQKIKFSALSAKAVALGFDAVATGHYARLSGGRLRRAVDKDKDQSYVLAVLSAEQLRHAAFPIGDTPKPQIREEAARRGLAVAEKPDSHDICFIPSGNTRAFLGERIGVRRGAVVNADGTVLAEHDGVHGFTIGQRKGLGIAGPGPDGRPRYVTAIDADTATVRVGEAADLDVREMLGRAVVFTSGTAPSGPFECAVQVRAHGETADAVAELVGDELVVRLRAPLRGVAPGQTLALYRHDPDGDEVLGSATIAGTSR</sequence>
<reference key="1">
    <citation type="submission" date="2006-10" db="EMBL/GenBank/DDBJ databases">
        <authorList>
            <person name="Fleischmann R.D."/>
            <person name="Dodson R.J."/>
            <person name="Haft D.H."/>
            <person name="Merkel J.S."/>
            <person name="Nelson W.C."/>
            <person name="Fraser C.M."/>
        </authorList>
    </citation>
    <scope>NUCLEOTIDE SEQUENCE [LARGE SCALE GENOMIC DNA]</scope>
    <source>
        <strain>104</strain>
    </source>
</reference>
<comment type="function">
    <text evidence="1">Catalyzes the 2-thiolation of uridine at the wobble position (U34) of tRNA, leading to the formation of s(2)U34.</text>
</comment>
<comment type="catalytic activity">
    <reaction evidence="1">
        <text>S-sulfanyl-L-cysteinyl-[protein] + uridine(34) in tRNA + AH2 + ATP = 2-thiouridine(34) in tRNA + L-cysteinyl-[protein] + A + AMP + diphosphate + H(+)</text>
        <dbReference type="Rhea" id="RHEA:47032"/>
        <dbReference type="Rhea" id="RHEA-COMP:10131"/>
        <dbReference type="Rhea" id="RHEA-COMP:11726"/>
        <dbReference type="Rhea" id="RHEA-COMP:11727"/>
        <dbReference type="Rhea" id="RHEA-COMP:11728"/>
        <dbReference type="ChEBI" id="CHEBI:13193"/>
        <dbReference type="ChEBI" id="CHEBI:15378"/>
        <dbReference type="ChEBI" id="CHEBI:17499"/>
        <dbReference type="ChEBI" id="CHEBI:29950"/>
        <dbReference type="ChEBI" id="CHEBI:30616"/>
        <dbReference type="ChEBI" id="CHEBI:33019"/>
        <dbReference type="ChEBI" id="CHEBI:61963"/>
        <dbReference type="ChEBI" id="CHEBI:65315"/>
        <dbReference type="ChEBI" id="CHEBI:87170"/>
        <dbReference type="ChEBI" id="CHEBI:456215"/>
        <dbReference type="EC" id="2.8.1.13"/>
    </reaction>
</comment>
<comment type="subcellular location">
    <subcellularLocation>
        <location evidence="1">Cytoplasm</location>
    </subcellularLocation>
</comment>
<comment type="similarity">
    <text evidence="1">Belongs to the MnmA/TRMU family.</text>
</comment>
<comment type="sequence caution" evidence="2">
    <conflict type="erroneous initiation">
        <sequence resource="EMBL-CDS" id="ABK69410"/>
    </conflict>
</comment>
<dbReference type="EC" id="2.8.1.13" evidence="1"/>
<dbReference type="EMBL" id="CP000479">
    <property type="protein sequence ID" value="ABK69410.1"/>
    <property type="status" value="ALT_INIT"/>
    <property type="molecule type" value="Genomic_DNA"/>
</dbReference>
<dbReference type="RefSeq" id="WP_023880976.1">
    <property type="nucleotide sequence ID" value="NC_008595.1"/>
</dbReference>
<dbReference type="SMR" id="A0QJE5"/>
<dbReference type="GeneID" id="75271271"/>
<dbReference type="KEGG" id="mav:MAV_3871"/>
<dbReference type="HOGENOM" id="CLU_035188_0_2_11"/>
<dbReference type="Proteomes" id="UP000001574">
    <property type="component" value="Chromosome"/>
</dbReference>
<dbReference type="GO" id="GO:0005737">
    <property type="term" value="C:cytoplasm"/>
    <property type="evidence" value="ECO:0007669"/>
    <property type="project" value="UniProtKB-SubCell"/>
</dbReference>
<dbReference type="GO" id="GO:0005524">
    <property type="term" value="F:ATP binding"/>
    <property type="evidence" value="ECO:0007669"/>
    <property type="project" value="UniProtKB-KW"/>
</dbReference>
<dbReference type="GO" id="GO:0000049">
    <property type="term" value="F:tRNA binding"/>
    <property type="evidence" value="ECO:0007669"/>
    <property type="project" value="UniProtKB-KW"/>
</dbReference>
<dbReference type="GO" id="GO:0103016">
    <property type="term" value="F:tRNA-uridine 2-sulfurtransferase activity"/>
    <property type="evidence" value="ECO:0007669"/>
    <property type="project" value="UniProtKB-EC"/>
</dbReference>
<dbReference type="GO" id="GO:0002143">
    <property type="term" value="P:tRNA wobble position uridine thiolation"/>
    <property type="evidence" value="ECO:0007669"/>
    <property type="project" value="TreeGrafter"/>
</dbReference>
<dbReference type="CDD" id="cd01998">
    <property type="entry name" value="MnmA_TRMU-like"/>
    <property type="match status" value="1"/>
</dbReference>
<dbReference type="FunFam" id="3.40.50.620:FF:000057">
    <property type="entry name" value="tRNA-specific 2-thiouridylase MnmA"/>
    <property type="match status" value="1"/>
</dbReference>
<dbReference type="Gene3D" id="2.30.30.280">
    <property type="entry name" value="Adenine nucleotide alpha hydrolases-like domains"/>
    <property type="match status" value="1"/>
</dbReference>
<dbReference type="Gene3D" id="3.40.50.620">
    <property type="entry name" value="HUPs"/>
    <property type="match status" value="1"/>
</dbReference>
<dbReference type="Gene3D" id="2.40.30.10">
    <property type="entry name" value="Translation factors"/>
    <property type="match status" value="1"/>
</dbReference>
<dbReference type="HAMAP" id="MF_00144">
    <property type="entry name" value="tRNA_thiouridyl_MnmA"/>
    <property type="match status" value="1"/>
</dbReference>
<dbReference type="InterPro" id="IPR004506">
    <property type="entry name" value="MnmA-like"/>
</dbReference>
<dbReference type="InterPro" id="IPR046885">
    <property type="entry name" value="MnmA-like_C"/>
</dbReference>
<dbReference type="InterPro" id="IPR046884">
    <property type="entry name" value="MnmA-like_central"/>
</dbReference>
<dbReference type="InterPro" id="IPR023382">
    <property type="entry name" value="MnmA-like_central_sf"/>
</dbReference>
<dbReference type="InterPro" id="IPR014729">
    <property type="entry name" value="Rossmann-like_a/b/a_fold"/>
</dbReference>
<dbReference type="NCBIfam" id="NF001138">
    <property type="entry name" value="PRK00143.1"/>
    <property type="match status" value="1"/>
</dbReference>
<dbReference type="NCBIfam" id="TIGR00420">
    <property type="entry name" value="trmU"/>
    <property type="match status" value="1"/>
</dbReference>
<dbReference type="PANTHER" id="PTHR11933:SF5">
    <property type="entry name" value="MITOCHONDRIAL TRNA-SPECIFIC 2-THIOURIDYLASE 1"/>
    <property type="match status" value="1"/>
</dbReference>
<dbReference type="PANTHER" id="PTHR11933">
    <property type="entry name" value="TRNA 5-METHYLAMINOMETHYL-2-THIOURIDYLATE -METHYLTRANSFERASE"/>
    <property type="match status" value="1"/>
</dbReference>
<dbReference type="Pfam" id="PF03054">
    <property type="entry name" value="tRNA_Me_trans"/>
    <property type="match status" value="1"/>
</dbReference>
<dbReference type="Pfam" id="PF20258">
    <property type="entry name" value="tRNA_Me_trans_C"/>
    <property type="match status" value="1"/>
</dbReference>
<dbReference type="Pfam" id="PF20259">
    <property type="entry name" value="tRNA_Me_trans_M"/>
    <property type="match status" value="1"/>
</dbReference>
<dbReference type="SUPFAM" id="SSF52402">
    <property type="entry name" value="Adenine nucleotide alpha hydrolases-like"/>
    <property type="match status" value="1"/>
</dbReference>
<keyword id="KW-0067">ATP-binding</keyword>
<keyword id="KW-0963">Cytoplasm</keyword>
<keyword id="KW-1015">Disulfide bond</keyword>
<keyword id="KW-0547">Nucleotide-binding</keyword>
<keyword id="KW-0694">RNA-binding</keyword>
<keyword id="KW-0808">Transferase</keyword>
<keyword id="KW-0819">tRNA processing</keyword>
<keyword id="KW-0820">tRNA-binding</keyword>
<proteinExistence type="inferred from homology"/>